<name>SINA_DROME</name>
<keyword id="KW-0963">Cytoplasm</keyword>
<keyword id="KW-0217">Developmental protein</keyword>
<keyword id="KW-0479">Metal-binding</keyword>
<keyword id="KW-0539">Nucleus</keyword>
<keyword id="KW-1185">Reference proteome</keyword>
<keyword id="KW-0716">Sensory transduction</keyword>
<keyword id="KW-0808">Transferase</keyword>
<keyword id="KW-0833">Ubl conjugation pathway</keyword>
<keyword id="KW-0844">Vision</keyword>
<keyword id="KW-0862">Zinc</keyword>
<keyword id="KW-0863">Zinc-finger</keyword>
<protein>
    <recommendedName>
        <fullName>E3 ubiquitin-protein ligase sina</fullName>
        <ecNumber>2.3.2.27</ecNumber>
    </recommendedName>
    <alternativeName>
        <fullName evidence="10">RING-type E3 ubiquitin transferase sina</fullName>
    </alternativeName>
    <alternativeName>
        <fullName>Seven in absentia protein</fullName>
    </alternativeName>
</protein>
<organism>
    <name type="scientific">Drosophila melanogaster</name>
    <name type="common">Fruit fly</name>
    <dbReference type="NCBI Taxonomy" id="7227"/>
    <lineage>
        <taxon>Eukaryota</taxon>
        <taxon>Metazoa</taxon>
        <taxon>Ecdysozoa</taxon>
        <taxon>Arthropoda</taxon>
        <taxon>Hexapoda</taxon>
        <taxon>Insecta</taxon>
        <taxon>Pterygota</taxon>
        <taxon>Neoptera</taxon>
        <taxon>Endopterygota</taxon>
        <taxon>Diptera</taxon>
        <taxon>Brachycera</taxon>
        <taxon>Muscomorpha</taxon>
        <taxon>Ephydroidea</taxon>
        <taxon>Drosophilidae</taxon>
        <taxon>Drosophila</taxon>
        <taxon>Sophophora</taxon>
    </lineage>
</organism>
<evidence type="ECO:0000250" key="1"/>
<evidence type="ECO:0000255" key="2">
    <source>
        <dbReference type="PROSITE-ProRule" id="PRU00175"/>
    </source>
</evidence>
<evidence type="ECO:0000255" key="3">
    <source>
        <dbReference type="PROSITE-ProRule" id="PRU00455"/>
    </source>
</evidence>
<evidence type="ECO:0000256" key="4">
    <source>
        <dbReference type="SAM" id="MobiDB-lite"/>
    </source>
</evidence>
<evidence type="ECO:0000269" key="5">
    <source>
    </source>
</evidence>
<evidence type="ECO:0000269" key="6">
    <source>
    </source>
</evidence>
<evidence type="ECO:0000269" key="7">
    <source>
    </source>
</evidence>
<evidence type="ECO:0000269" key="8">
    <source>
    </source>
</evidence>
<evidence type="ECO:0000269" key="9">
    <source>
    </source>
</evidence>
<evidence type="ECO:0000305" key="10"/>
<comment type="function">
    <text evidence="5 6 7 8 9">E3 ubiquitin-protein ligase that is required for specification of R7 photoreceptor cell fate in the eye by mediating the ubiquitination and subsequent proteasomal degradation of Tramtrack (ttk) (PubMed:11526076, PubMed:12215542, PubMed:18160715, PubMed:9267026, PubMed:9267027). E3 Ubiquitin ligases accept ubiquitin from an E2 ubiquitin-conjugating enzyme in the form of a thioester and then directly transfers the ubiquitin to targeted substrates (PubMed:12215542). Acts via the formation of a complex with ebi and phyl that ubiquitinates the transcription repressor ttk, a general inhibitor of photoreceptor differentiation, in a subset of photoreceptor cells in the eye, leading to the differentiation of cells into neurons (PubMed:11526076, PubMed:12215542, PubMed:9267026, PubMed:9267027). Also involved in external sensory organ development (PubMed:11526076).</text>
</comment>
<comment type="catalytic activity">
    <reaction>
        <text>S-ubiquitinyl-[E2 ubiquitin-conjugating enzyme]-L-cysteine + [acceptor protein]-L-lysine = [E2 ubiquitin-conjugating enzyme]-L-cysteine + N(6)-ubiquitinyl-[acceptor protein]-L-lysine.</text>
        <dbReference type="EC" id="2.3.2.27"/>
    </reaction>
</comment>
<comment type="pathway">
    <text>Protein modification; protein ubiquitination.</text>
</comment>
<comment type="subunit">
    <text evidence="8 9">Component of some E3 complex at least composed of sina, ebi and phyl. Interacts with eff.</text>
</comment>
<comment type="interaction">
    <interactant intactId="EBI-77019">
        <id>P21461</id>
    </interactant>
    <interactant intactId="EBI-170347">
        <id>A1Z8K2</id>
        <label>Dmel\CG13204</label>
    </interactant>
    <organismsDiffer>false</organismsDiffer>
    <experiments>4</experiments>
</comment>
<comment type="interaction">
    <interactant intactId="EBI-77019">
        <id>P21461</id>
    </interactant>
    <interactant intactId="EBI-136503">
        <id>Q9W3H5</id>
        <label>Dmel\CG2147</label>
    </interactant>
    <organismsDiffer>false</organismsDiffer>
    <experiments>5</experiments>
</comment>
<comment type="interaction">
    <interactant intactId="EBI-77019">
        <id>P21461</id>
    </interactant>
    <interactant intactId="EBI-421390">
        <id>Q95RJ9</id>
        <label>ebi</label>
    </interactant>
    <organismsDiffer>false</organismsDiffer>
    <experiments>4</experiments>
</comment>
<comment type="interaction">
    <interactant intactId="EBI-77019">
        <id>P21461</id>
    </interactant>
    <interactant intactId="EBI-77033">
        <id>Q27934</id>
        <label>phyl</label>
    </interactant>
    <organismsDiffer>false</organismsDiffer>
    <experiments>11</experiments>
</comment>
<comment type="interaction">
    <interactant intactId="EBI-77019">
        <id>P21461</id>
    </interactant>
    <interactant intactId="EBI-77019">
        <id>P21461</id>
        <label>sina</label>
    </interactant>
    <organismsDiffer>false</organismsDiffer>
    <experiments>2</experiments>
</comment>
<comment type="interaction">
    <interactant intactId="EBI-77019">
        <id>P21461</id>
    </interactant>
    <interactant intactId="EBI-77008">
        <id>P42282</id>
        <label>ttk</label>
    </interactant>
    <organismsDiffer>false</organismsDiffer>
    <experiments>4</experiments>
</comment>
<comment type="subcellular location">
    <subcellularLocation>
        <location>Cytoplasm</location>
    </subcellularLocation>
    <subcellularLocation>
        <location>Nucleus</location>
    </subcellularLocation>
</comment>
<comment type="tissue specificity">
    <text>In many ommatidial precursor cells.</text>
</comment>
<comment type="domain">
    <text evidence="1">The RING-type zinc finger domain is essential for ubiquitin ligase activity.</text>
</comment>
<comment type="domain">
    <text evidence="1">The SBD domain (substrate-binding domain) mediates the interaction with substrate proteins. It is related to the TRAF family.</text>
</comment>
<comment type="similarity">
    <text evidence="10">Belongs to the SINA (Seven in absentia) family.</text>
</comment>
<dbReference type="EC" id="2.3.2.27"/>
<dbReference type="EMBL" id="M38384">
    <property type="protein sequence ID" value="AAA28901.1"/>
    <property type="molecule type" value="mRNA"/>
</dbReference>
<dbReference type="EMBL" id="AE014296">
    <property type="protein sequence ID" value="AAF49403.1"/>
    <property type="molecule type" value="Genomic_DNA"/>
</dbReference>
<dbReference type="EMBL" id="AE014296">
    <property type="protein sequence ID" value="AAN11744.1"/>
    <property type="molecule type" value="Genomic_DNA"/>
</dbReference>
<dbReference type="EMBL" id="AY060358">
    <property type="protein sequence ID" value="AAL25397.1"/>
    <property type="molecule type" value="mRNA"/>
</dbReference>
<dbReference type="PIR" id="A36195">
    <property type="entry name" value="A36195"/>
</dbReference>
<dbReference type="RefSeq" id="NP_001287089.1">
    <property type="nucleotide sequence ID" value="NM_001300160.1"/>
</dbReference>
<dbReference type="RefSeq" id="NP_476725.1">
    <property type="nucleotide sequence ID" value="NM_057377.4"/>
</dbReference>
<dbReference type="RefSeq" id="NP_730206.1">
    <property type="nucleotide sequence ID" value="NM_168689.2"/>
</dbReference>
<dbReference type="SMR" id="P21461"/>
<dbReference type="BioGRID" id="65183">
    <property type="interactions" value="132"/>
</dbReference>
<dbReference type="DIP" id="DIP-17392N"/>
<dbReference type="FunCoup" id="P21461">
    <property type="interactions" value="1574"/>
</dbReference>
<dbReference type="IntAct" id="P21461">
    <property type="interactions" value="89"/>
</dbReference>
<dbReference type="STRING" id="7227.FBpp0075091"/>
<dbReference type="PaxDb" id="7227-FBpp0075091"/>
<dbReference type="DNASU" id="39884"/>
<dbReference type="EnsemblMetazoa" id="FBtr0075332">
    <property type="protein sequence ID" value="FBpp0075091"/>
    <property type="gene ID" value="FBgn0003410"/>
</dbReference>
<dbReference type="EnsemblMetazoa" id="FBtr0075333">
    <property type="protein sequence ID" value="FBpp0075092"/>
    <property type="gene ID" value="FBgn0003410"/>
</dbReference>
<dbReference type="EnsemblMetazoa" id="FBtr0344230">
    <property type="protein sequence ID" value="FBpp0310636"/>
    <property type="gene ID" value="FBgn0003410"/>
</dbReference>
<dbReference type="GeneID" id="39884"/>
<dbReference type="KEGG" id="dme:Dmel_CG9949"/>
<dbReference type="AGR" id="FB:FBgn0003410"/>
<dbReference type="CTD" id="39884"/>
<dbReference type="FlyBase" id="FBgn0003410">
    <property type="gene designation" value="sina"/>
</dbReference>
<dbReference type="VEuPathDB" id="VectorBase:FBgn0003410"/>
<dbReference type="eggNOG" id="KOG3002">
    <property type="taxonomic scope" value="Eukaryota"/>
</dbReference>
<dbReference type="HOGENOM" id="CLU_028215_0_0_1"/>
<dbReference type="InParanoid" id="P21461"/>
<dbReference type="OMA" id="HSNTGCT"/>
<dbReference type="OrthoDB" id="941555at2759"/>
<dbReference type="PhylomeDB" id="P21461"/>
<dbReference type="Reactome" id="R-DME-373752">
    <property type="pathway name" value="Netrin-1 signaling"/>
</dbReference>
<dbReference type="Reactome" id="R-DME-5689880">
    <property type="pathway name" value="Ub-specific processing proteases"/>
</dbReference>
<dbReference type="Reactome" id="R-DME-983168">
    <property type="pathway name" value="Antigen processing: Ubiquitination &amp; Proteasome degradation"/>
</dbReference>
<dbReference type="SignaLink" id="P21461"/>
<dbReference type="UniPathway" id="UPA00143"/>
<dbReference type="BioGRID-ORCS" id="39884">
    <property type="hits" value="0 hits in 3 CRISPR screens"/>
</dbReference>
<dbReference type="GenomeRNAi" id="39884"/>
<dbReference type="PRO" id="PR:P21461"/>
<dbReference type="Proteomes" id="UP000000803">
    <property type="component" value="Chromosome 3L"/>
</dbReference>
<dbReference type="Bgee" id="FBgn0003410">
    <property type="expression patterns" value="Expressed in photoreceptor cell R7 (Drosophila) in insect head and 286 other cell types or tissues"/>
</dbReference>
<dbReference type="ExpressionAtlas" id="P21461">
    <property type="expression patterns" value="baseline and differential"/>
</dbReference>
<dbReference type="GO" id="GO:0005737">
    <property type="term" value="C:cytoplasm"/>
    <property type="evidence" value="ECO:0000318"/>
    <property type="project" value="GO_Central"/>
</dbReference>
<dbReference type="GO" id="GO:0005829">
    <property type="term" value="C:cytosol"/>
    <property type="evidence" value="ECO:0000314"/>
    <property type="project" value="FlyBase"/>
</dbReference>
<dbReference type="GO" id="GO:0005634">
    <property type="term" value="C:nucleus"/>
    <property type="evidence" value="ECO:0000314"/>
    <property type="project" value="UniProtKB"/>
</dbReference>
<dbReference type="GO" id="GO:0000151">
    <property type="term" value="C:ubiquitin ligase complex"/>
    <property type="evidence" value="ECO:0000314"/>
    <property type="project" value="FlyBase"/>
</dbReference>
<dbReference type="GO" id="GO:0042802">
    <property type="term" value="F:identical protein binding"/>
    <property type="evidence" value="ECO:0000353"/>
    <property type="project" value="IntAct"/>
</dbReference>
<dbReference type="GO" id="GO:0031624">
    <property type="term" value="F:ubiquitin conjugating enzyme binding"/>
    <property type="evidence" value="ECO:0000318"/>
    <property type="project" value="GO_Central"/>
</dbReference>
<dbReference type="GO" id="GO:0061630">
    <property type="term" value="F:ubiquitin protein ligase activity"/>
    <property type="evidence" value="ECO:0000314"/>
    <property type="project" value="FlyBase"/>
</dbReference>
<dbReference type="GO" id="GO:0004842">
    <property type="term" value="F:ubiquitin-protein transferase activity"/>
    <property type="evidence" value="ECO:0000250"/>
    <property type="project" value="FlyBase"/>
</dbReference>
<dbReference type="GO" id="GO:0008270">
    <property type="term" value="F:zinc ion binding"/>
    <property type="evidence" value="ECO:0000255"/>
    <property type="project" value="FlyBase"/>
</dbReference>
<dbReference type="GO" id="GO:0035883">
    <property type="term" value="P:enteroendocrine cell differentiation"/>
    <property type="evidence" value="ECO:0000315"/>
    <property type="project" value="FlyBase"/>
</dbReference>
<dbReference type="GO" id="GO:0032436">
    <property type="term" value="P:positive regulation of proteasomal ubiquitin-dependent protein catabolic process"/>
    <property type="evidence" value="ECO:0000314"/>
    <property type="project" value="FlyBase"/>
</dbReference>
<dbReference type="GO" id="GO:0010498">
    <property type="term" value="P:proteasomal protein catabolic process"/>
    <property type="evidence" value="ECO:0000314"/>
    <property type="project" value="FlyBase"/>
</dbReference>
<dbReference type="GO" id="GO:0043161">
    <property type="term" value="P:proteasome-mediated ubiquitin-dependent protein catabolic process"/>
    <property type="evidence" value="ECO:0000314"/>
    <property type="project" value="FlyBase"/>
</dbReference>
<dbReference type="GO" id="GO:0016567">
    <property type="term" value="P:protein ubiquitination"/>
    <property type="evidence" value="ECO:0000314"/>
    <property type="project" value="FlyBase"/>
</dbReference>
<dbReference type="GO" id="GO:0007465">
    <property type="term" value="P:R7 cell fate commitment"/>
    <property type="evidence" value="ECO:0000315"/>
    <property type="project" value="FlyBase"/>
</dbReference>
<dbReference type="GO" id="GO:0045676">
    <property type="term" value="P:regulation of R7 cell differentiation"/>
    <property type="evidence" value="ECO:0000315"/>
    <property type="project" value="UniProtKB"/>
</dbReference>
<dbReference type="GO" id="GO:0007423">
    <property type="term" value="P:sensory organ development"/>
    <property type="evidence" value="ECO:0000315"/>
    <property type="project" value="FlyBase"/>
</dbReference>
<dbReference type="GO" id="GO:0045500">
    <property type="term" value="P:sevenless signaling pathway"/>
    <property type="evidence" value="ECO:0000316"/>
    <property type="project" value="FlyBase"/>
</dbReference>
<dbReference type="GO" id="GO:0006511">
    <property type="term" value="P:ubiquitin-dependent protein catabolic process"/>
    <property type="evidence" value="ECO:0000353"/>
    <property type="project" value="FlyBase"/>
</dbReference>
<dbReference type="GO" id="GO:0007601">
    <property type="term" value="P:visual perception"/>
    <property type="evidence" value="ECO:0007669"/>
    <property type="project" value="UniProtKB-KW"/>
</dbReference>
<dbReference type="CDD" id="cd03829">
    <property type="entry name" value="Sina"/>
    <property type="match status" value="1"/>
</dbReference>
<dbReference type="FunFam" id="2.60.210.10:FF:000002">
    <property type="entry name" value="E3 ubiquitin-protein ligase"/>
    <property type="match status" value="1"/>
</dbReference>
<dbReference type="FunFam" id="3.30.40.10:FF:000823">
    <property type="entry name" value="E3 ubiquitin-protein ligase"/>
    <property type="match status" value="1"/>
</dbReference>
<dbReference type="FunFam" id="3.30.40.10:FF:000041">
    <property type="entry name" value="E3 ubiquitin-protein ligase SINAT3"/>
    <property type="match status" value="1"/>
</dbReference>
<dbReference type="Gene3D" id="2.60.210.10">
    <property type="entry name" value="Apoptosis, Tumor Necrosis Factor Receptor Associated Protein 2, Chain A"/>
    <property type="match status" value="1"/>
</dbReference>
<dbReference type="Gene3D" id="3.30.40.10">
    <property type="entry name" value="Zinc/RING finger domain, C3HC4 (zinc finger)"/>
    <property type="match status" value="2"/>
</dbReference>
<dbReference type="InterPro" id="IPR018121">
    <property type="entry name" value="7-in-absentia-prot_TRAF-dom"/>
</dbReference>
<dbReference type="InterPro" id="IPR004162">
    <property type="entry name" value="SINA-like_animal"/>
</dbReference>
<dbReference type="InterPro" id="IPR049548">
    <property type="entry name" value="Sina-like_RING"/>
</dbReference>
<dbReference type="InterPro" id="IPR008974">
    <property type="entry name" value="TRAF-like"/>
</dbReference>
<dbReference type="InterPro" id="IPR001841">
    <property type="entry name" value="Znf_RING"/>
</dbReference>
<dbReference type="InterPro" id="IPR013083">
    <property type="entry name" value="Znf_RING/FYVE/PHD"/>
</dbReference>
<dbReference type="InterPro" id="IPR013010">
    <property type="entry name" value="Znf_SIAH"/>
</dbReference>
<dbReference type="PANTHER" id="PTHR45877">
    <property type="entry name" value="E3 UBIQUITIN-PROTEIN LIGASE SIAH2"/>
    <property type="match status" value="1"/>
</dbReference>
<dbReference type="PANTHER" id="PTHR45877:SF2">
    <property type="entry name" value="E3 UBIQUITIN-PROTEIN LIGASE SINA-RELATED"/>
    <property type="match status" value="1"/>
</dbReference>
<dbReference type="Pfam" id="PF21362">
    <property type="entry name" value="Sina_RING"/>
    <property type="match status" value="1"/>
</dbReference>
<dbReference type="Pfam" id="PF03145">
    <property type="entry name" value="Sina_TRAF"/>
    <property type="match status" value="1"/>
</dbReference>
<dbReference type="Pfam" id="PF21361">
    <property type="entry name" value="Sina_ZnF"/>
    <property type="match status" value="1"/>
</dbReference>
<dbReference type="SUPFAM" id="SSF57850">
    <property type="entry name" value="RING/U-box"/>
    <property type="match status" value="1"/>
</dbReference>
<dbReference type="SUPFAM" id="SSF49599">
    <property type="entry name" value="TRAF domain-like"/>
    <property type="match status" value="1"/>
</dbReference>
<dbReference type="PROSITE" id="PS50089">
    <property type="entry name" value="ZF_RING_2"/>
    <property type="match status" value="1"/>
</dbReference>
<dbReference type="PROSITE" id="PS51081">
    <property type="entry name" value="ZF_SIAH"/>
    <property type="match status" value="1"/>
</dbReference>
<sequence length="314" mass="33707">MSNKINPKRREPTAAAAGAGATGVATNTSTSTGSSSAGNTSSANTSSSSSSSLSSAGGGDAGMSADLTSLFECPVCFDYVLPPILQCSSGHLVCVSCRSKLTCCPTCRGPLANIRNLAMEKVASNVKFPCKHSGYGCTASLVYTEKTEHEETCECRPYLCPCPGASCKWQGPLDLVMQHLMMSHKSITTLQGEDIVFLATDINLPGAVDWVMMQSCFGHHFMLVLEKQEKYDGHQQFFAIVQLIGSRKEAENFVYRLELNGNRRRLTWEAMPRSIHEGVASAIHNSDCLVFDTSIAQLFADNGNLGINVTISLV</sequence>
<accession>P21461</accession>
<accession>A4V214</accession>
<accession>Q9VVB0</accession>
<reference key="1">
    <citation type="journal article" date="1990" name="Cell">
        <title>Seven in absentia, a gene required for specification of R7 cell fate in the Drosophila eye.</title>
        <authorList>
            <person name="Carthew R.W."/>
            <person name="Rubin G.M."/>
        </authorList>
    </citation>
    <scope>NUCLEOTIDE SEQUENCE [MRNA]</scope>
</reference>
<reference key="2">
    <citation type="journal article" date="2000" name="Science">
        <title>The genome sequence of Drosophila melanogaster.</title>
        <authorList>
            <person name="Adams M.D."/>
            <person name="Celniker S.E."/>
            <person name="Holt R.A."/>
            <person name="Evans C.A."/>
            <person name="Gocayne J.D."/>
            <person name="Amanatides P.G."/>
            <person name="Scherer S.E."/>
            <person name="Li P.W."/>
            <person name="Hoskins R.A."/>
            <person name="Galle R.F."/>
            <person name="George R.A."/>
            <person name="Lewis S.E."/>
            <person name="Richards S."/>
            <person name="Ashburner M."/>
            <person name="Henderson S.N."/>
            <person name="Sutton G.G."/>
            <person name="Wortman J.R."/>
            <person name="Yandell M.D."/>
            <person name="Zhang Q."/>
            <person name="Chen L.X."/>
            <person name="Brandon R.C."/>
            <person name="Rogers Y.-H.C."/>
            <person name="Blazej R.G."/>
            <person name="Champe M."/>
            <person name="Pfeiffer B.D."/>
            <person name="Wan K.H."/>
            <person name="Doyle C."/>
            <person name="Baxter E.G."/>
            <person name="Helt G."/>
            <person name="Nelson C.R."/>
            <person name="Miklos G.L.G."/>
            <person name="Abril J.F."/>
            <person name="Agbayani A."/>
            <person name="An H.-J."/>
            <person name="Andrews-Pfannkoch C."/>
            <person name="Baldwin D."/>
            <person name="Ballew R.M."/>
            <person name="Basu A."/>
            <person name="Baxendale J."/>
            <person name="Bayraktaroglu L."/>
            <person name="Beasley E.M."/>
            <person name="Beeson K.Y."/>
            <person name="Benos P.V."/>
            <person name="Berman B.P."/>
            <person name="Bhandari D."/>
            <person name="Bolshakov S."/>
            <person name="Borkova D."/>
            <person name="Botchan M.R."/>
            <person name="Bouck J."/>
            <person name="Brokstein P."/>
            <person name="Brottier P."/>
            <person name="Burtis K.C."/>
            <person name="Busam D.A."/>
            <person name="Butler H."/>
            <person name="Cadieu E."/>
            <person name="Center A."/>
            <person name="Chandra I."/>
            <person name="Cherry J.M."/>
            <person name="Cawley S."/>
            <person name="Dahlke C."/>
            <person name="Davenport L.B."/>
            <person name="Davies P."/>
            <person name="de Pablos B."/>
            <person name="Delcher A."/>
            <person name="Deng Z."/>
            <person name="Mays A.D."/>
            <person name="Dew I."/>
            <person name="Dietz S.M."/>
            <person name="Dodson K."/>
            <person name="Doup L.E."/>
            <person name="Downes M."/>
            <person name="Dugan-Rocha S."/>
            <person name="Dunkov B.C."/>
            <person name="Dunn P."/>
            <person name="Durbin K.J."/>
            <person name="Evangelista C.C."/>
            <person name="Ferraz C."/>
            <person name="Ferriera S."/>
            <person name="Fleischmann W."/>
            <person name="Fosler C."/>
            <person name="Gabrielian A.E."/>
            <person name="Garg N.S."/>
            <person name="Gelbart W.M."/>
            <person name="Glasser K."/>
            <person name="Glodek A."/>
            <person name="Gong F."/>
            <person name="Gorrell J.H."/>
            <person name="Gu Z."/>
            <person name="Guan P."/>
            <person name="Harris M."/>
            <person name="Harris N.L."/>
            <person name="Harvey D.A."/>
            <person name="Heiman T.J."/>
            <person name="Hernandez J.R."/>
            <person name="Houck J."/>
            <person name="Hostin D."/>
            <person name="Houston K.A."/>
            <person name="Howland T.J."/>
            <person name="Wei M.-H."/>
            <person name="Ibegwam C."/>
            <person name="Jalali M."/>
            <person name="Kalush F."/>
            <person name="Karpen G.H."/>
            <person name="Ke Z."/>
            <person name="Kennison J.A."/>
            <person name="Ketchum K.A."/>
            <person name="Kimmel B.E."/>
            <person name="Kodira C.D."/>
            <person name="Kraft C.L."/>
            <person name="Kravitz S."/>
            <person name="Kulp D."/>
            <person name="Lai Z."/>
            <person name="Lasko P."/>
            <person name="Lei Y."/>
            <person name="Levitsky A.A."/>
            <person name="Li J.H."/>
            <person name="Li Z."/>
            <person name="Liang Y."/>
            <person name="Lin X."/>
            <person name="Liu X."/>
            <person name="Mattei B."/>
            <person name="McIntosh T.C."/>
            <person name="McLeod M.P."/>
            <person name="McPherson D."/>
            <person name="Merkulov G."/>
            <person name="Milshina N.V."/>
            <person name="Mobarry C."/>
            <person name="Morris J."/>
            <person name="Moshrefi A."/>
            <person name="Mount S.M."/>
            <person name="Moy M."/>
            <person name="Murphy B."/>
            <person name="Murphy L."/>
            <person name="Muzny D.M."/>
            <person name="Nelson D.L."/>
            <person name="Nelson D.R."/>
            <person name="Nelson K.A."/>
            <person name="Nixon K."/>
            <person name="Nusskern D.R."/>
            <person name="Pacleb J.M."/>
            <person name="Palazzolo M."/>
            <person name="Pittman G.S."/>
            <person name="Pan S."/>
            <person name="Pollard J."/>
            <person name="Puri V."/>
            <person name="Reese M.G."/>
            <person name="Reinert K."/>
            <person name="Remington K."/>
            <person name="Saunders R.D.C."/>
            <person name="Scheeler F."/>
            <person name="Shen H."/>
            <person name="Shue B.C."/>
            <person name="Siden-Kiamos I."/>
            <person name="Simpson M."/>
            <person name="Skupski M.P."/>
            <person name="Smith T.J."/>
            <person name="Spier E."/>
            <person name="Spradling A.C."/>
            <person name="Stapleton M."/>
            <person name="Strong R."/>
            <person name="Sun E."/>
            <person name="Svirskas R."/>
            <person name="Tector C."/>
            <person name="Turner R."/>
            <person name="Venter E."/>
            <person name="Wang A.H."/>
            <person name="Wang X."/>
            <person name="Wang Z.-Y."/>
            <person name="Wassarman D.A."/>
            <person name="Weinstock G.M."/>
            <person name="Weissenbach J."/>
            <person name="Williams S.M."/>
            <person name="Woodage T."/>
            <person name="Worley K.C."/>
            <person name="Wu D."/>
            <person name="Yang S."/>
            <person name="Yao Q.A."/>
            <person name="Ye J."/>
            <person name="Yeh R.-F."/>
            <person name="Zaveri J.S."/>
            <person name="Zhan M."/>
            <person name="Zhang G."/>
            <person name="Zhao Q."/>
            <person name="Zheng L."/>
            <person name="Zheng X.H."/>
            <person name="Zhong F.N."/>
            <person name="Zhong W."/>
            <person name="Zhou X."/>
            <person name="Zhu S.C."/>
            <person name="Zhu X."/>
            <person name="Smith H.O."/>
            <person name="Gibbs R.A."/>
            <person name="Myers E.W."/>
            <person name="Rubin G.M."/>
            <person name="Venter J.C."/>
        </authorList>
    </citation>
    <scope>NUCLEOTIDE SEQUENCE [LARGE SCALE GENOMIC DNA]</scope>
    <source>
        <strain>Berkeley</strain>
    </source>
</reference>
<reference key="3">
    <citation type="journal article" date="2002" name="Genome Biol.">
        <title>Annotation of the Drosophila melanogaster euchromatic genome: a systematic review.</title>
        <authorList>
            <person name="Misra S."/>
            <person name="Crosby M.A."/>
            <person name="Mungall C.J."/>
            <person name="Matthews B.B."/>
            <person name="Campbell K.S."/>
            <person name="Hradecky P."/>
            <person name="Huang Y."/>
            <person name="Kaminker J.S."/>
            <person name="Millburn G.H."/>
            <person name="Prochnik S.E."/>
            <person name="Smith C.D."/>
            <person name="Tupy J.L."/>
            <person name="Whitfield E.J."/>
            <person name="Bayraktaroglu L."/>
            <person name="Berman B.P."/>
            <person name="Bettencourt B.R."/>
            <person name="Celniker S.E."/>
            <person name="de Grey A.D.N.J."/>
            <person name="Drysdale R.A."/>
            <person name="Harris N.L."/>
            <person name="Richter J."/>
            <person name="Russo S."/>
            <person name="Schroeder A.J."/>
            <person name="Shu S.Q."/>
            <person name="Stapleton M."/>
            <person name="Yamada C."/>
            <person name="Ashburner M."/>
            <person name="Gelbart W.M."/>
            <person name="Rubin G.M."/>
            <person name="Lewis S.E."/>
        </authorList>
    </citation>
    <scope>GENOME REANNOTATION</scope>
    <source>
        <strain>Berkeley</strain>
    </source>
</reference>
<reference key="4">
    <citation type="journal article" date="2002" name="Genome Biol.">
        <title>A Drosophila full-length cDNA resource.</title>
        <authorList>
            <person name="Stapleton M."/>
            <person name="Carlson J.W."/>
            <person name="Brokstein P."/>
            <person name="Yu C."/>
            <person name="Champe M."/>
            <person name="George R.A."/>
            <person name="Guarin H."/>
            <person name="Kronmiller B."/>
            <person name="Pacleb J.M."/>
            <person name="Park S."/>
            <person name="Wan K.H."/>
            <person name="Rubin G.M."/>
            <person name="Celniker S.E."/>
        </authorList>
    </citation>
    <scope>NUCLEOTIDE SEQUENCE [LARGE SCALE MRNA]</scope>
    <source>
        <strain>Berkeley</strain>
        <tissue>Head</tissue>
    </source>
</reference>
<reference key="5">
    <citation type="journal article" date="1997" name="Cell">
        <title>PHYL acts to down-regulate TTK88, a transcriptional repressor of neuronal cell fates, by a SINA-dependent mechanism.</title>
        <authorList>
            <person name="Tang A.H."/>
            <person name="Neufeld T.P."/>
            <person name="Kwan E."/>
            <person name="Rubin G.M."/>
        </authorList>
    </citation>
    <scope>FUNCTION IN TTK DEGRADATION</scope>
    <scope>INTERACTION WITH PHYL AND EFF</scope>
</reference>
<reference key="6">
    <citation type="journal article" date="1997" name="Cell">
        <title>Photoreceptor cell differentiation requires regulated proteolysis of the transcriptional repressor Tramtrack.</title>
        <authorList>
            <person name="Li S."/>
            <person name="Li Y."/>
            <person name="Carthew R.W."/>
            <person name="Lai Z.-C."/>
        </authorList>
    </citation>
    <scope>FUNCTION IN TTK DEGRADATION</scope>
    <scope>INTERACTION WITH PHYL</scope>
</reference>
<reference key="7">
    <citation type="journal article" date="2000" name="EMBO J.">
        <title>A role for Ebi in neuronal cell cycle control.</title>
        <authorList>
            <person name="Boulton S.J."/>
            <person name="Brook A."/>
            <person name="Staehling-Hampton K."/>
            <person name="Heitzler P."/>
            <person name="Dyson N."/>
        </authorList>
    </citation>
    <scope>COMPONENT OF A COMPLEX WITH EBI AND PHYL</scope>
</reference>
<reference key="8">
    <citation type="journal article" date="2001" name="Development">
        <title>A dual function of phyllopod in Drosophila external sensory organ development: cell fate specification of sensory organ precursor and its progeny.</title>
        <authorList>
            <person name="Pi H."/>
            <person name="Wu H.-J."/>
            <person name="Chien C.-T."/>
        </authorList>
    </citation>
    <scope>FUNCTION</scope>
</reference>
<reference key="9">
    <citation type="journal article" date="2002" name="Mol. Cell. Biol.">
        <title>Phyllopod acts as an adaptor protein to link the sina ubiquitin ligase to the substrate protein tramtrack.</title>
        <authorList>
            <person name="Li S."/>
            <person name="Xu C."/>
            <person name="Carthew R.W."/>
        </authorList>
    </citation>
    <scope>FUNCTION OF THE COMPLEX</scope>
</reference>
<reference key="10">
    <citation type="journal article" date="2008" name="Mol. Cell. Biol.">
        <title>Deubiquitylating enzyme UBP64 controls cell fate through stabilization of the transcriptional repressor tramtrack.</title>
        <authorList>
            <person name="Bajpe P.K."/>
            <person name="van der Knaap J.A."/>
            <person name="Demmers J.A."/>
            <person name="Bezstarosti K."/>
            <person name="Bassett A."/>
            <person name="van Beusekom H.M."/>
            <person name="Travers A.A."/>
            <person name="Verrijzer C.P."/>
        </authorList>
    </citation>
    <scope>FUNCTION</scope>
</reference>
<proteinExistence type="evidence at protein level"/>
<gene>
    <name type="primary">sina</name>
    <name type="ORF">CG9949</name>
</gene>
<feature type="chain" id="PRO_0000056175" description="E3 ubiquitin-protein ligase sina">
    <location>
        <begin position="1"/>
        <end position="314"/>
    </location>
</feature>
<feature type="zinc finger region" description="RING-type" evidence="2">
    <location>
        <begin position="73"/>
        <end position="108"/>
    </location>
</feature>
<feature type="zinc finger region" description="SIAH-type" evidence="3">
    <location>
        <begin position="125"/>
        <end position="185"/>
    </location>
</feature>
<feature type="region of interest" description="Disordered" evidence="4">
    <location>
        <begin position="1"/>
        <end position="55"/>
    </location>
</feature>
<feature type="region of interest" description="SBD">
    <location>
        <begin position="122"/>
        <end position="314"/>
    </location>
</feature>
<feature type="compositionally biased region" description="Low complexity" evidence="4">
    <location>
        <begin position="13"/>
        <end position="55"/>
    </location>
</feature>
<feature type="binding site" evidence="1">
    <location>
        <position position="130"/>
    </location>
    <ligand>
        <name>Zn(2+)</name>
        <dbReference type="ChEBI" id="CHEBI:29105"/>
        <label>1</label>
    </ligand>
</feature>
<feature type="binding site" evidence="1">
    <location>
        <position position="137"/>
    </location>
    <ligand>
        <name>Zn(2+)</name>
        <dbReference type="ChEBI" id="CHEBI:29105"/>
        <label>1</label>
    </ligand>
</feature>
<feature type="binding site" evidence="1">
    <location>
        <position position="149"/>
    </location>
    <ligand>
        <name>Zn(2+)</name>
        <dbReference type="ChEBI" id="CHEBI:29105"/>
        <label>1</label>
    </ligand>
</feature>
<feature type="binding site" evidence="1">
    <location>
        <position position="153"/>
    </location>
    <ligand>
        <name>Zn(2+)</name>
        <dbReference type="ChEBI" id="CHEBI:29105"/>
        <label>1</label>
    </ligand>
</feature>
<feature type="binding site" evidence="1">
    <location>
        <position position="160"/>
    </location>
    <ligand>
        <name>Zn(2+)</name>
        <dbReference type="ChEBI" id="CHEBI:29105"/>
        <label>2</label>
    </ligand>
</feature>
<feature type="binding site" evidence="1">
    <location>
        <position position="167"/>
    </location>
    <ligand>
        <name>Zn(2+)</name>
        <dbReference type="ChEBI" id="CHEBI:29105"/>
        <label>2</label>
    </ligand>
</feature>
<feature type="binding site" evidence="1">
    <location>
        <position position="179"/>
    </location>
    <ligand>
        <name>Zn(2+)</name>
        <dbReference type="ChEBI" id="CHEBI:29105"/>
        <label>2</label>
    </ligand>
</feature>
<feature type="binding site" evidence="1">
    <location>
        <position position="184"/>
    </location>
    <ligand>
        <name>Zn(2+)</name>
        <dbReference type="ChEBI" id="CHEBI:29105"/>
        <label>2</label>
    </ligand>
</feature>